<organism>
    <name type="scientific">Saccharomyces cerevisiae (strain YJM789)</name>
    <name type="common">Baker's yeast</name>
    <dbReference type="NCBI Taxonomy" id="307796"/>
    <lineage>
        <taxon>Eukaryota</taxon>
        <taxon>Fungi</taxon>
        <taxon>Dikarya</taxon>
        <taxon>Ascomycota</taxon>
        <taxon>Saccharomycotina</taxon>
        <taxon>Saccharomycetes</taxon>
        <taxon>Saccharomycetales</taxon>
        <taxon>Saccharomycetaceae</taxon>
        <taxon>Saccharomyces</taxon>
    </lineage>
</organism>
<keyword id="KW-0963">Cytoplasm</keyword>
<keyword id="KW-0378">Hydrolase</keyword>
<keyword id="KW-0496">Mitochondrion</keyword>
<keyword id="KW-0547">Nucleotide-binding</keyword>
<keyword id="KW-0539">Nucleus</keyword>
<name>HNT2_YEAS7</name>
<dbReference type="EC" id="3.6.1.29"/>
<dbReference type="EMBL" id="AAFW02000145">
    <property type="protein sequence ID" value="EDN60633.1"/>
    <property type="status" value="ALT_INIT"/>
    <property type="molecule type" value="Genomic_DNA"/>
</dbReference>
<dbReference type="SMR" id="A6ZYQ3"/>
<dbReference type="HOGENOM" id="CLU_056776_7_2_1"/>
<dbReference type="OrthoDB" id="13869at4893"/>
<dbReference type="Proteomes" id="UP000007060">
    <property type="component" value="Unassembled WGS sequence"/>
</dbReference>
<dbReference type="GO" id="GO:0005739">
    <property type="term" value="C:mitochondrion"/>
    <property type="evidence" value="ECO:0007669"/>
    <property type="project" value="UniProtKB-SubCell"/>
</dbReference>
<dbReference type="GO" id="GO:0005634">
    <property type="term" value="C:nucleus"/>
    <property type="evidence" value="ECO:0007669"/>
    <property type="project" value="UniProtKB-SubCell"/>
</dbReference>
<dbReference type="GO" id="GO:0047710">
    <property type="term" value="F:bis(5'-adenosyl)-triphosphatase activity"/>
    <property type="evidence" value="ECO:0007669"/>
    <property type="project" value="UniProtKB-EC"/>
</dbReference>
<dbReference type="GO" id="GO:0000166">
    <property type="term" value="F:nucleotide binding"/>
    <property type="evidence" value="ECO:0007669"/>
    <property type="project" value="UniProtKB-KW"/>
</dbReference>
<dbReference type="CDD" id="cd01275">
    <property type="entry name" value="FHIT"/>
    <property type="match status" value="1"/>
</dbReference>
<dbReference type="Gene3D" id="3.30.428.10">
    <property type="entry name" value="HIT-like"/>
    <property type="match status" value="1"/>
</dbReference>
<dbReference type="InterPro" id="IPR051884">
    <property type="entry name" value="Bis(5'-adenosyl)-TPase_reg"/>
</dbReference>
<dbReference type="InterPro" id="IPR039383">
    <property type="entry name" value="FHIT"/>
</dbReference>
<dbReference type="InterPro" id="IPR019808">
    <property type="entry name" value="Histidine_triad_CS"/>
</dbReference>
<dbReference type="InterPro" id="IPR011146">
    <property type="entry name" value="HIT-like"/>
</dbReference>
<dbReference type="InterPro" id="IPR036265">
    <property type="entry name" value="HIT-like_sf"/>
</dbReference>
<dbReference type="PANTHER" id="PTHR46243">
    <property type="entry name" value="BIS(5'-ADENOSYL)-TRIPHOSPHATASE"/>
    <property type="match status" value="1"/>
</dbReference>
<dbReference type="PANTHER" id="PTHR46243:SF1">
    <property type="entry name" value="BIS(5'-ADENOSYL)-TRIPHOSPHATASE"/>
    <property type="match status" value="1"/>
</dbReference>
<dbReference type="Pfam" id="PF01230">
    <property type="entry name" value="HIT"/>
    <property type="match status" value="1"/>
</dbReference>
<dbReference type="SUPFAM" id="SSF54197">
    <property type="entry name" value="HIT-like"/>
    <property type="match status" value="1"/>
</dbReference>
<dbReference type="PROSITE" id="PS00892">
    <property type="entry name" value="HIT_1"/>
    <property type="match status" value="1"/>
</dbReference>
<dbReference type="PROSITE" id="PS51084">
    <property type="entry name" value="HIT_2"/>
    <property type="match status" value="1"/>
</dbReference>
<sequence>MNKPIYFSKFLVTEQVFYKSKYTYALVNLKPIVPGHVLIVPLRTTVLNLSDLTMPESQDYFKTLQLIHRFIKWQYKADSINVAIQDGPEAGQSVPHLHTHIIPRYKINNVGDLIYDKLDHWDGNGTLTDWQGRRDEYLGVGGRQARKNNSTSATVDGDELSQGPNVLKPDSQRKVRALTEMKKEAEDLQARLEEFVSSDPGLTQWL</sequence>
<comment type="function">
    <text evidence="1">Cleaves A-5'-PPP-5'A to yield AMP and ADP. Can cleave all dinucleoside polyphosphates, provided the phosphate chain contains at least 3 phosphates and that 1 of the 2 bases composing the nucleotide is a purine. Is most effective on dinucleoside triphosphates. Negatively regulates intracellular dinucleoside polyphosphate levels, which elevate following heat shock (By similarity).</text>
</comment>
<comment type="catalytic activity">
    <reaction>
        <text>P(1),P(3)-bis(5'-adenosyl) triphosphate + H2O = AMP + ADP + 2 H(+)</text>
        <dbReference type="Rhea" id="RHEA:13893"/>
        <dbReference type="ChEBI" id="CHEBI:15377"/>
        <dbReference type="ChEBI" id="CHEBI:15378"/>
        <dbReference type="ChEBI" id="CHEBI:58529"/>
        <dbReference type="ChEBI" id="CHEBI:456215"/>
        <dbReference type="ChEBI" id="CHEBI:456216"/>
        <dbReference type="EC" id="3.6.1.29"/>
    </reaction>
</comment>
<comment type="cofactor">
    <cofactor evidence="1">
        <name>Mn(2+)</name>
        <dbReference type="ChEBI" id="CHEBI:29035"/>
    </cofactor>
    <text evidence="1">Divalent metal cations. Mn(2+) is the preferred ion.</text>
</comment>
<comment type="subunit">
    <text evidence="1">Homodimer.</text>
</comment>
<comment type="subcellular location">
    <subcellularLocation>
        <location evidence="1">Cytoplasm</location>
    </subcellularLocation>
    <subcellularLocation>
        <location evidence="1">Nucleus</location>
    </subcellularLocation>
    <subcellularLocation>
        <location evidence="1">Mitochondrion</location>
    </subcellularLocation>
</comment>
<comment type="sequence caution" evidence="4">
    <conflict type="erroneous initiation">
        <sequence resource="EMBL-CDS" id="EDN60633"/>
    </conflict>
</comment>
<accession>A6ZYQ3</accession>
<evidence type="ECO:0000250" key="1"/>
<evidence type="ECO:0000255" key="2">
    <source>
        <dbReference type="PROSITE-ProRule" id="PRU00464"/>
    </source>
</evidence>
<evidence type="ECO:0000256" key="3">
    <source>
        <dbReference type="SAM" id="MobiDB-lite"/>
    </source>
</evidence>
<evidence type="ECO:0000305" key="4"/>
<proteinExistence type="inferred from homology"/>
<reference key="1">
    <citation type="journal article" date="2007" name="Proc. Natl. Acad. Sci. U.S.A.">
        <title>Genome sequencing and comparative analysis of Saccharomyces cerevisiae strain YJM789.</title>
        <authorList>
            <person name="Wei W."/>
            <person name="McCusker J.H."/>
            <person name="Hyman R.W."/>
            <person name="Jones T."/>
            <person name="Ning Y."/>
            <person name="Cao Z."/>
            <person name="Gu Z."/>
            <person name="Bruno D."/>
            <person name="Miranda M."/>
            <person name="Nguyen M."/>
            <person name="Wilhelmy J."/>
            <person name="Komp C."/>
            <person name="Tamse R."/>
            <person name="Wang X."/>
            <person name="Jia P."/>
            <person name="Luedi P."/>
            <person name="Oefner P.J."/>
            <person name="David L."/>
            <person name="Dietrich F.S."/>
            <person name="Li Y."/>
            <person name="Davis R.W."/>
            <person name="Steinmetz L.M."/>
        </authorList>
    </citation>
    <scope>NUCLEOTIDE SEQUENCE [LARGE SCALE GENOMIC DNA]</scope>
    <source>
        <strain>YJM789</strain>
    </source>
</reference>
<gene>
    <name type="primary">HNT2</name>
    <name type="synonym">APH1</name>
    <name type="ORF">SCY_1191</name>
</gene>
<protein>
    <recommendedName>
        <fullName>Bis(5'-adenosyl)-triphosphatase</fullName>
        <ecNumber>3.6.1.29</ecNumber>
    </recommendedName>
    <alternativeName>
        <fullName>AP3A hydrolase</fullName>
        <shortName>AP3Aase</shortName>
    </alternativeName>
    <alternativeName>
        <fullName>Diadenosine 5',5'''-P1,P3-triphosphate hydrolase</fullName>
    </alternativeName>
    <alternativeName>
        <fullName>Dinucleosidetriphosphatase</fullName>
    </alternativeName>
    <alternativeName>
        <fullName>Hit family protein 2</fullName>
    </alternativeName>
</protein>
<feature type="chain" id="PRO_0000392106" description="Bis(5'-adenosyl)-triphosphatase">
    <location>
        <begin position="1"/>
        <end position="206"/>
    </location>
</feature>
<feature type="domain" description="HIT" evidence="2">
    <location>
        <begin position="3"/>
        <end position="115"/>
    </location>
</feature>
<feature type="region of interest" description="Disordered" evidence="3">
    <location>
        <begin position="143"/>
        <end position="164"/>
    </location>
</feature>
<feature type="short sequence motif" description="Histidine triad motif">
    <location>
        <begin position="96"/>
        <end position="100"/>
    </location>
</feature>
<feature type="active site" description="Tele-AMP-histidine intermediate" evidence="1">
    <location>
        <position position="98"/>
    </location>
</feature>